<gene>
    <name type="ordered locus">CNF02430</name>
</gene>
<accession>P0CL94</accession>
<accession>Q55QW3</accession>
<accession>Q5KFA4</accession>
<reference key="1">
    <citation type="journal article" date="2005" name="Science">
        <title>The genome of the basidiomycetous yeast and human pathogen Cryptococcus neoformans.</title>
        <authorList>
            <person name="Loftus B.J."/>
            <person name="Fung E."/>
            <person name="Roncaglia P."/>
            <person name="Rowley D."/>
            <person name="Amedeo P."/>
            <person name="Bruno D."/>
            <person name="Vamathevan J."/>
            <person name="Miranda M."/>
            <person name="Anderson I.J."/>
            <person name="Fraser J.A."/>
            <person name="Allen J.E."/>
            <person name="Bosdet I.E."/>
            <person name="Brent M.R."/>
            <person name="Chiu R."/>
            <person name="Doering T.L."/>
            <person name="Donlin M.J."/>
            <person name="D'Souza C.A."/>
            <person name="Fox D.S."/>
            <person name="Grinberg V."/>
            <person name="Fu J."/>
            <person name="Fukushima M."/>
            <person name="Haas B.J."/>
            <person name="Huang J.C."/>
            <person name="Janbon G."/>
            <person name="Jones S.J.M."/>
            <person name="Koo H.L."/>
            <person name="Krzywinski M.I."/>
            <person name="Kwon-Chung K.J."/>
            <person name="Lengeler K.B."/>
            <person name="Maiti R."/>
            <person name="Marra M.A."/>
            <person name="Marra R.E."/>
            <person name="Mathewson C.A."/>
            <person name="Mitchell T.G."/>
            <person name="Pertea M."/>
            <person name="Riggs F.R."/>
            <person name="Salzberg S.L."/>
            <person name="Schein J.E."/>
            <person name="Shvartsbeyn A."/>
            <person name="Shin H."/>
            <person name="Shumway M."/>
            <person name="Specht C.A."/>
            <person name="Suh B.B."/>
            <person name="Tenney A."/>
            <person name="Utterback T.R."/>
            <person name="Wickes B.L."/>
            <person name="Wortman J.R."/>
            <person name="Wye N.H."/>
            <person name="Kronstad J.W."/>
            <person name="Lodge J.K."/>
            <person name="Heitman J."/>
            <person name="Davis R.W."/>
            <person name="Fraser C.M."/>
            <person name="Hyman R.W."/>
        </authorList>
    </citation>
    <scope>NUCLEOTIDE SEQUENCE [LARGE SCALE GENOMIC DNA]</scope>
    <source>
        <strain>JEC21 / ATCC MYA-565</strain>
    </source>
</reference>
<comment type="function">
    <text evidence="2">Hydrolyzes fatty acids from S-acylated cysteine residues in proteins with a strong preference for palmitoylated G-alpha proteins over other acyl substrates. Mediates the deacylation of G-alpha proteins such as GPA1 in vivo, but has weak or no activity toward palmitoylated Ras proteins. Has weak lysophospholipase activity in vitro; however such activity may not exist in vivo.</text>
</comment>
<comment type="catalytic activity">
    <reaction evidence="2">
        <text>S-hexadecanoyl-L-cysteinyl-[protein] + H2O = L-cysteinyl-[protein] + hexadecanoate + H(+)</text>
        <dbReference type="Rhea" id="RHEA:19233"/>
        <dbReference type="Rhea" id="RHEA-COMP:10131"/>
        <dbReference type="Rhea" id="RHEA-COMP:11032"/>
        <dbReference type="ChEBI" id="CHEBI:7896"/>
        <dbReference type="ChEBI" id="CHEBI:15377"/>
        <dbReference type="ChEBI" id="CHEBI:15378"/>
        <dbReference type="ChEBI" id="CHEBI:29950"/>
        <dbReference type="ChEBI" id="CHEBI:74151"/>
        <dbReference type="EC" id="3.1.2.22"/>
    </reaction>
</comment>
<comment type="subcellular location">
    <subcellularLocation>
        <location evidence="2">Cytoplasm</location>
    </subcellularLocation>
    <subcellularLocation>
        <location evidence="2">Nucleus</location>
    </subcellularLocation>
</comment>
<comment type="similarity">
    <text evidence="3">Belongs to the AB hydrolase superfamily. AB hydrolase 2 family.</text>
</comment>
<comment type="sequence caution" evidence="3">
    <conflict type="erroneous initiation">
        <sequence resource="EMBL-CDS" id="AAW44284"/>
    </conflict>
    <text>Extended N-terminus.</text>
</comment>
<organism>
    <name type="scientific">Cryptococcus neoformans var. neoformans serotype D (strain JEC21 / ATCC MYA-565)</name>
    <name type="common">Filobasidiella neoformans</name>
    <dbReference type="NCBI Taxonomy" id="214684"/>
    <lineage>
        <taxon>Eukaryota</taxon>
        <taxon>Fungi</taxon>
        <taxon>Dikarya</taxon>
        <taxon>Basidiomycota</taxon>
        <taxon>Agaricomycotina</taxon>
        <taxon>Tremellomycetes</taxon>
        <taxon>Tremellales</taxon>
        <taxon>Cryptococcaceae</taxon>
        <taxon>Cryptococcus</taxon>
        <taxon>Cryptococcus neoformans species complex</taxon>
    </lineage>
</organism>
<protein>
    <recommendedName>
        <fullName>Acyl-protein thioesterase 1</fullName>
        <ecNumber evidence="2">3.1.2.-</ecNumber>
    </recommendedName>
    <alternativeName>
        <fullName>Palmitoyl-protein hydrolase</fullName>
        <ecNumber evidence="2">3.1.2.22</ecNumber>
    </alternativeName>
</protein>
<name>APTH1_CRYNJ</name>
<sequence length="238" mass="26492">MPTSLKHLKISPKEAHTATVIFLHGLGDSGHGWLPVAKMLWSSFPNVKWILPHAPTIPVSLNHGMAMPSWFDIRHLDKLDNSENDDEQGMLETLKSVDELIQAEVDSGIPENRIVLGGFSQGGAISVLNMLTTKRKLAGVVALSTWVPLNHKIVQMMSEHAKDIPVFWGHGTNDPVVDYRFGQRSVDFLVQKCGYKLLSQGTTFARPGIRFESYPGMPHSSCPQEIEDLKSWLMEALK</sequence>
<keyword id="KW-0963">Cytoplasm</keyword>
<keyword id="KW-0276">Fatty acid metabolism</keyword>
<keyword id="KW-0378">Hydrolase</keyword>
<keyword id="KW-0443">Lipid metabolism</keyword>
<keyword id="KW-0539">Nucleus</keyword>
<keyword id="KW-1185">Reference proteome</keyword>
<keyword id="KW-0719">Serine esterase</keyword>
<dbReference type="EC" id="3.1.2.-" evidence="2"/>
<dbReference type="EC" id="3.1.2.22" evidence="2"/>
<dbReference type="EMBL" id="AE017346">
    <property type="protein sequence ID" value="AAW44284.2"/>
    <property type="status" value="ALT_INIT"/>
    <property type="molecule type" value="Genomic_DNA"/>
</dbReference>
<dbReference type="RefSeq" id="XP_024514502.1">
    <property type="nucleotide sequence ID" value="XM_024658575.1"/>
</dbReference>
<dbReference type="RefSeq" id="XP_571591.1">
    <property type="nucleotide sequence ID" value="XM_571591.1"/>
</dbReference>
<dbReference type="SMR" id="P0CL94"/>
<dbReference type="FunCoup" id="P0CL94">
    <property type="interactions" value="344"/>
</dbReference>
<dbReference type="STRING" id="214684.P0CL94"/>
<dbReference type="ESTHER" id="cryne-apth1">
    <property type="family name" value="LYsophospholipase_carboxylesterase"/>
</dbReference>
<dbReference type="MEROPS" id="S09.025"/>
<dbReference type="PaxDb" id="214684-P0CL94"/>
<dbReference type="EnsemblFungi" id="ALO68992">
    <property type="protein sequence ID" value="ALO68992"/>
    <property type="gene ID" value="CNF02430"/>
</dbReference>
<dbReference type="GeneID" id="3258032"/>
<dbReference type="KEGG" id="cne:CNF02430"/>
<dbReference type="VEuPathDB" id="FungiDB:CNF02430"/>
<dbReference type="eggNOG" id="KOG2112">
    <property type="taxonomic scope" value="Eukaryota"/>
</dbReference>
<dbReference type="HOGENOM" id="CLU_049413_3_5_1"/>
<dbReference type="InParanoid" id="P0CL94"/>
<dbReference type="OMA" id="WYDILAM"/>
<dbReference type="OrthoDB" id="2418081at2759"/>
<dbReference type="Proteomes" id="UP000002149">
    <property type="component" value="Chromosome 6"/>
</dbReference>
<dbReference type="GO" id="GO:0005737">
    <property type="term" value="C:cytoplasm"/>
    <property type="evidence" value="ECO:0000318"/>
    <property type="project" value="GO_Central"/>
</dbReference>
<dbReference type="GO" id="GO:0005634">
    <property type="term" value="C:nucleus"/>
    <property type="evidence" value="ECO:0007669"/>
    <property type="project" value="UniProtKB-SubCell"/>
</dbReference>
<dbReference type="GO" id="GO:0052689">
    <property type="term" value="F:carboxylic ester hydrolase activity"/>
    <property type="evidence" value="ECO:0000318"/>
    <property type="project" value="GO_Central"/>
</dbReference>
<dbReference type="GO" id="GO:0008474">
    <property type="term" value="F:palmitoyl-(protein) hydrolase activity"/>
    <property type="evidence" value="ECO:0000318"/>
    <property type="project" value="GO_Central"/>
</dbReference>
<dbReference type="GO" id="GO:0006631">
    <property type="term" value="P:fatty acid metabolic process"/>
    <property type="evidence" value="ECO:0007669"/>
    <property type="project" value="UniProtKB-KW"/>
</dbReference>
<dbReference type="FunFam" id="3.40.50.1820:FF:000010">
    <property type="entry name" value="Acyl-protein thioesterase 2"/>
    <property type="match status" value="1"/>
</dbReference>
<dbReference type="Gene3D" id="3.40.50.1820">
    <property type="entry name" value="alpha/beta hydrolase"/>
    <property type="match status" value="1"/>
</dbReference>
<dbReference type="InterPro" id="IPR029058">
    <property type="entry name" value="AB_hydrolase_fold"/>
</dbReference>
<dbReference type="InterPro" id="IPR050565">
    <property type="entry name" value="LYPA1-2/EST-like"/>
</dbReference>
<dbReference type="InterPro" id="IPR003140">
    <property type="entry name" value="PLipase/COase/thioEstase"/>
</dbReference>
<dbReference type="PANTHER" id="PTHR10655:SF17">
    <property type="entry name" value="LYSOPHOSPHOLIPASE-LIKE PROTEIN 1"/>
    <property type="match status" value="1"/>
</dbReference>
<dbReference type="PANTHER" id="PTHR10655">
    <property type="entry name" value="LYSOPHOSPHOLIPASE-RELATED"/>
    <property type="match status" value="1"/>
</dbReference>
<dbReference type="Pfam" id="PF02230">
    <property type="entry name" value="Abhydrolase_2"/>
    <property type="match status" value="1"/>
</dbReference>
<dbReference type="SUPFAM" id="SSF53474">
    <property type="entry name" value="alpha/beta-Hydrolases"/>
    <property type="match status" value="1"/>
</dbReference>
<proteinExistence type="inferred from homology"/>
<evidence type="ECO:0000250" key="1"/>
<evidence type="ECO:0000250" key="2">
    <source>
        <dbReference type="UniProtKB" id="Q12354"/>
    </source>
</evidence>
<evidence type="ECO:0000305" key="3"/>
<feature type="chain" id="PRO_0000229007" description="Acyl-protein thioesterase 1">
    <location>
        <begin position="1"/>
        <end position="238"/>
    </location>
</feature>
<feature type="active site" description="Charge relay system" evidence="1">
    <location>
        <position position="120"/>
    </location>
</feature>
<feature type="active site" description="Charge relay system" evidence="1">
    <location>
        <position position="174"/>
    </location>
</feature>
<feature type="active site" description="Charge relay system" evidence="1">
    <location>
        <position position="219"/>
    </location>
</feature>